<accession>Q3SM23</accession>
<keyword id="KW-0004">4Fe-4S</keyword>
<keyword id="KW-0963">Cytoplasm</keyword>
<keyword id="KW-0408">Iron</keyword>
<keyword id="KW-0411">Iron-sulfur</keyword>
<keyword id="KW-0479">Metal-binding</keyword>
<keyword id="KW-1185">Reference proteome</keyword>
<keyword id="KW-0949">S-adenosyl-L-methionine</keyword>
<keyword id="KW-0808">Transferase</keyword>
<name>LIPA_THIDA</name>
<protein>
    <recommendedName>
        <fullName evidence="1">Lipoyl synthase</fullName>
        <ecNumber evidence="1">2.8.1.8</ecNumber>
    </recommendedName>
    <alternativeName>
        <fullName evidence="1">Lip-syn</fullName>
        <shortName evidence="1">LS</shortName>
    </alternativeName>
    <alternativeName>
        <fullName evidence="1">Lipoate synthase</fullName>
    </alternativeName>
    <alternativeName>
        <fullName evidence="1">Lipoic acid synthase</fullName>
    </alternativeName>
    <alternativeName>
        <fullName evidence="1">Sulfur insertion protein LipA</fullName>
    </alternativeName>
</protein>
<reference key="1">
    <citation type="journal article" date="2006" name="J. Bacteriol.">
        <title>The genome sequence of the obligately chemolithoautotrophic, facultatively anaerobic bacterium Thiobacillus denitrificans.</title>
        <authorList>
            <person name="Beller H.R."/>
            <person name="Chain P.S."/>
            <person name="Letain T.E."/>
            <person name="Chakicherla A."/>
            <person name="Larimer F.W."/>
            <person name="Richardson P.M."/>
            <person name="Coleman M.A."/>
            <person name="Wood A.P."/>
            <person name="Kelly D.P."/>
        </authorList>
    </citation>
    <scope>NUCLEOTIDE SEQUENCE [LARGE SCALE GENOMIC DNA]</scope>
    <source>
        <strain>ATCC 25259 / T1</strain>
    </source>
</reference>
<comment type="function">
    <text evidence="1">Catalyzes the radical-mediated insertion of two sulfur atoms into the C-6 and C-8 positions of the octanoyl moiety bound to the lipoyl domains of lipoate-dependent enzymes, thereby converting the octanoylated domains into lipoylated derivatives.</text>
</comment>
<comment type="catalytic activity">
    <reaction evidence="1">
        <text>[[Fe-S] cluster scaffold protein carrying a second [4Fe-4S](2+) cluster] + N(6)-octanoyl-L-lysyl-[protein] + 2 oxidized [2Fe-2S]-[ferredoxin] + 2 S-adenosyl-L-methionine + 4 H(+) = [[Fe-S] cluster scaffold protein] + N(6)-[(R)-dihydrolipoyl]-L-lysyl-[protein] + 4 Fe(3+) + 2 hydrogen sulfide + 2 5'-deoxyadenosine + 2 L-methionine + 2 reduced [2Fe-2S]-[ferredoxin]</text>
        <dbReference type="Rhea" id="RHEA:16585"/>
        <dbReference type="Rhea" id="RHEA-COMP:9928"/>
        <dbReference type="Rhea" id="RHEA-COMP:10000"/>
        <dbReference type="Rhea" id="RHEA-COMP:10001"/>
        <dbReference type="Rhea" id="RHEA-COMP:10475"/>
        <dbReference type="Rhea" id="RHEA-COMP:14568"/>
        <dbReference type="Rhea" id="RHEA-COMP:14569"/>
        <dbReference type="ChEBI" id="CHEBI:15378"/>
        <dbReference type="ChEBI" id="CHEBI:17319"/>
        <dbReference type="ChEBI" id="CHEBI:29034"/>
        <dbReference type="ChEBI" id="CHEBI:29919"/>
        <dbReference type="ChEBI" id="CHEBI:33722"/>
        <dbReference type="ChEBI" id="CHEBI:33737"/>
        <dbReference type="ChEBI" id="CHEBI:33738"/>
        <dbReference type="ChEBI" id="CHEBI:57844"/>
        <dbReference type="ChEBI" id="CHEBI:59789"/>
        <dbReference type="ChEBI" id="CHEBI:78809"/>
        <dbReference type="ChEBI" id="CHEBI:83100"/>
        <dbReference type="EC" id="2.8.1.8"/>
    </reaction>
</comment>
<comment type="cofactor">
    <cofactor evidence="1">
        <name>[4Fe-4S] cluster</name>
        <dbReference type="ChEBI" id="CHEBI:49883"/>
    </cofactor>
    <text evidence="1">Binds 2 [4Fe-4S] clusters per subunit. One cluster is coordinated with 3 cysteines and an exchangeable S-adenosyl-L-methionine.</text>
</comment>
<comment type="pathway">
    <text evidence="1">Protein modification; protein lipoylation via endogenous pathway; protein N(6)-(lipoyl)lysine from octanoyl-[acyl-carrier-protein]: step 2/2.</text>
</comment>
<comment type="subcellular location">
    <subcellularLocation>
        <location evidence="1">Cytoplasm</location>
    </subcellularLocation>
</comment>
<comment type="similarity">
    <text evidence="1">Belongs to the radical SAM superfamily. Lipoyl synthase family.</text>
</comment>
<feature type="chain" id="PRO_1000012293" description="Lipoyl synthase">
    <location>
        <begin position="1"/>
        <end position="311"/>
    </location>
</feature>
<feature type="domain" description="Radical SAM core" evidence="2">
    <location>
        <begin position="70"/>
        <end position="287"/>
    </location>
</feature>
<feature type="binding site" evidence="1">
    <location>
        <position position="58"/>
    </location>
    <ligand>
        <name>[4Fe-4S] cluster</name>
        <dbReference type="ChEBI" id="CHEBI:49883"/>
        <label>1</label>
    </ligand>
</feature>
<feature type="binding site" evidence="1">
    <location>
        <position position="63"/>
    </location>
    <ligand>
        <name>[4Fe-4S] cluster</name>
        <dbReference type="ChEBI" id="CHEBI:49883"/>
        <label>1</label>
    </ligand>
</feature>
<feature type="binding site" evidence="1">
    <location>
        <position position="69"/>
    </location>
    <ligand>
        <name>[4Fe-4S] cluster</name>
        <dbReference type="ChEBI" id="CHEBI:49883"/>
        <label>1</label>
    </ligand>
</feature>
<feature type="binding site" evidence="1">
    <location>
        <position position="84"/>
    </location>
    <ligand>
        <name>[4Fe-4S] cluster</name>
        <dbReference type="ChEBI" id="CHEBI:49883"/>
        <label>2</label>
        <note>4Fe-4S-S-AdoMet</note>
    </ligand>
</feature>
<feature type="binding site" evidence="1">
    <location>
        <position position="88"/>
    </location>
    <ligand>
        <name>[4Fe-4S] cluster</name>
        <dbReference type="ChEBI" id="CHEBI:49883"/>
        <label>2</label>
        <note>4Fe-4S-S-AdoMet</note>
    </ligand>
</feature>
<feature type="binding site" evidence="1">
    <location>
        <position position="91"/>
    </location>
    <ligand>
        <name>[4Fe-4S] cluster</name>
        <dbReference type="ChEBI" id="CHEBI:49883"/>
        <label>2</label>
        <note>4Fe-4S-S-AdoMet</note>
    </ligand>
</feature>
<feature type="binding site" evidence="1">
    <location>
        <position position="298"/>
    </location>
    <ligand>
        <name>[4Fe-4S] cluster</name>
        <dbReference type="ChEBI" id="CHEBI:49883"/>
        <label>1</label>
    </ligand>
</feature>
<evidence type="ECO:0000255" key="1">
    <source>
        <dbReference type="HAMAP-Rule" id="MF_00206"/>
    </source>
</evidence>
<evidence type="ECO:0000255" key="2">
    <source>
        <dbReference type="PROSITE-ProRule" id="PRU01266"/>
    </source>
</evidence>
<organism>
    <name type="scientific">Thiobacillus denitrificans (strain ATCC 25259 / T1)</name>
    <dbReference type="NCBI Taxonomy" id="292415"/>
    <lineage>
        <taxon>Bacteria</taxon>
        <taxon>Pseudomonadati</taxon>
        <taxon>Pseudomonadota</taxon>
        <taxon>Betaproteobacteria</taxon>
        <taxon>Nitrosomonadales</taxon>
        <taxon>Thiobacillaceae</taxon>
        <taxon>Thiobacillus</taxon>
    </lineage>
</organism>
<gene>
    <name evidence="1" type="primary">lipA</name>
    <name type="ordered locus">Tbd_0274</name>
</gene>
<proteinExistence type="inferred from homology"/>
<dbReference type="EC" id="2.8.1.8" evidence="1"/>
<dbReference type="EMBL" id="CP000116">
    <property type="protein sequence ID" value="AAZ96227.1"/>
    <property type="molecule type" value="Genomic_DNA"/>
</dbReference>
<dbReference type="RefSeq" id="WP_011310787.1">
    <property type="nucleotide sequence ID" value="NC_007404.1"/>
</dbReference>
<dbReference type="SMR" id="Q3SM23"/>
<dbReference type="STRING" id="292415.Tbd_0274"/>
<dbReference type="KEGG" id="tbd:Tbd_0274"/>
<dbReference type="eggNOG" id="COG0320">
    <property type="taxonomic scope" value="Bacteria"/>
</dbReference>
<dbReference type="HOGENOM" id="CLU_033144_2_1_4"/>
<dbReference type="OrthoDB" id="9787898at2"/>
<dbReference type="UniPathway" id="UPA00538">
    <property type="reaction ID" value="UER00593"/>
</dbReference>
<dbReference type="Proteomes" id="UP000008291">
    <property type="component" value="Chromosome"/>
</dbReference>
<dbReference type="GO" id="GO:0005737">
    <property type="term" value="C:cytoplasm"/>
    <property type="evidence" value="ECO:0007669"/>
    <property type="project" value="UniProtKB-SubCell"/>
</dbReference>
<dbReference type="GO" id="GO:0051539">
    <property type="term" value="F:4 iron, 4 sulfur cluster binding"/>
    <property type="evidence" value="ECO:0007669"/>
    <property type="project" value="UniProtKB-UniRule"/>
</dbReference>
<dbReference type="GO" id="GO:0016992">
    <property type="term" value="F:lipoate synthase activity"/>
    <property type="evidence" value="ECO:0007669"/>
    <property type="project" value="UniProtKB-UniRule"/>
</dbReference>
<dbReference type="GO" id="GO:0046872">
    <property type="term" value="F:metal ion binding"/>
    <property type="evidence" value="ECO:0007669"/>
    <property type="project" value="UniProtKB-KW"/>
</dbReference>
<dbReference type="CDD" id="cd01335">
    <property type="entry name" value="Radical_SAM"/>
    <property type="match status" value="1"/>
</dbReference>
<dbReference type="FunFam" id="3.20.20.70:FF:000040">
    <property type="entry name" value="Lipoyl synthase"/>
    <property type="match status" value="1"/>
</dbReference>
<dbReference type="Gene3D" id="3.20.20.70">
    <property type="entry name" value="Aldolase class I"/>
    <property type="match status" value="1"/>
</dbReference>
<dbReference type="HAMAP" id="MF_00206">
    <property type="entry name" value="Lipoyl_synth"/>
    <property type="match status" value="1"/>
</dbReference>
<dbReference type="InterPro" id="IPR013785">
    <property type="entry name" value="Aldolase_TIM"/>
</dbReference>
<dbReference type="InterPro" id="IPR006638">
    <property type="entry name" value="Elp3/MiaA/NifB-like_rSAM"/>
</dbReference>
<dbReference type="InterPro" id="IPR031691">
    <property type="entry name" value="LIAS_N"/>
</dbReference>
<dbReference type="InterPro" id="IPR003698">
    <property type="entry name" value="Lipoyl_synth"/>
</dbReference>
<dbReference type="InterPro" id="IPR007197">
    <property type="entry name" value="rSAM"/>
</dbReference>
<dbReference type="NCBIfam" id="TIGR00510">
    <property type="entry name" value="lipA"/>
    <property type="match status" value="1"/>
</dbReference>
<dbReference type="NCBIfam" id="NF004019">
    <property type="entry name" value="PRK05481.1"/>
    <property type="match status" value="1"/>
</dbReference>
<dbReference type="NCBIfam" id="NF009544">
    <property type="entry name" value="PRK12928.1"/>
    <property type="match status" value="1"/>
</dbReference>
<dbReference type="PANTHER" id="PTHR10949">
    <property type="entry name" value="LIPOYL SYNTHASE"/>
    <property type="match status" value="1"/>
</dbReference>
<dbReference type="PANTHER" id="PTHR10949:SF0">
    <property type="entry name" value="LIPOYL SYNTHASE, MITOCHONDRIAL"/>
    <property type="match status" value="1"/>
</dbReference>
<dbReference type="Pfam" id="PF16881">
    <property type="entry name" value="LIAS_N"/>
    <property type="match status" value="1"/>
</dbReference>
<dbReference type="Pfam" id="PF04055">
    <property type="entry name" value="Radical_SAM"/>
    <property type="match status" value="1"/>
</dbReference>
<dbReference type="PIRSF" id="PIRSF005963">
    <property type="entry name" value="Lipoyl_synth"/>
    <property type="match status" value="1"/>
</dbReference>
<dbReference type="SFLD" id="SFLDF00271">
    <property type="entry name" value="lipoyl_synthase"/>
    <property type="match status" value="1"/>
</dbReference>
<dbReference type="SFLD" id="SFLDG01058">
    <property type="entry name" value="lipoyl_synthase_like"/>
    <property type="match status" value="1"/>
</dbReference>
<dbReference type="SMART" id="SM00729">
    <property type="entry name" value="Elp3"/>
    <property type="match status" value="1"/>
</dbReference>
<dbReference type="SUPFAM" id="SSF102114">
    <property type="entry name" value="Radical SAM enzymes"/>
    <property type="match status" value="1"/>
</dbReference>
<dbReference type="PROSITE" id="PS51918">
    <property type="entry name" value="RADICAL_SAM"/>
    <property type="match status" value="1"/>
</dbReference>
<sequence length="311" mass="34174">MADPLQHKGAAKTSRIPIKIVPQERQRLPPWIRAKAPSLPNVGRLKGILREAKLHTVCEEASCPNLGECFGHGTATFMILGDLCTRRCPFCDVGHGTPLPPDADEPRHLAETIALMALKYVVITSVDRDDLRDGGAGHFAECIAAVREKSPATRIEILTPDFRGRLDKALAALDRAPPDVMNHNLETVPRLYKAARPGADYAHSLKLLQDFRTRHPDIPTKSGLMLGLGETDDEILEVMRDLRAHGVDMLTLGQYLQPSRHHLAVLRFVTPERFAQFEQEALAMGFRHAACGPMVRSSYHADQQAAAAAAG</sequence>